<reference key="1">
    <citation type="journal article" date="1992" name="Infect. Immun.">
        <title>Structure and function of a 40,000-molecular-weight protein antigen of Mycobacterium tuberculosis.</title>
        <authorList>
            <person name="Andersen A.B."/>
            <person name="Andersen P."/>
            <person name="Ljungqvist L."/>
        </authorList>
    </citation>
    <scope>NUCLEOTIDE SEQUENCE [GENOMIC DNA]</scope>
    <source>
        <strain>ATCC 35801 / TMC 107 / Erdman</strain>
    </source>
</reference>
<reference key="2">
    <citation type="submission" date="1997-03" db="EMBL/GenBank/DDBJ databases">
        <title>Host-vector system for high level expression and purification of enzymatically active L-alanine dehydrogenase of M.tuberculosis in E.coli.</title>
        <authorList>
            <person name="Singh M."/>
            <person name="Hutter B."/>
        </authorList>
    </citation>
    <scope>NUCLEOTIDE SEQUENCE [GENOMIC DNA]</scope>
    <source>
        <strain>ATCC 25618 / H37Rv</strain>
    </source>
</reference>
<reference key="3">
    <citation type="journal article" date="1998" name="Nature">
        <title>Deciphering the biology of Mycobacterium tuberculosis from the complete genome sequence.</title>
        <authorList>
            <person name="Cole S.T."/>
            <person name="Brosch R."/>
            <person name="Parkhill J."/>
            <person name="Garnier T."/>
            <person name="Churcher C.M."/>
            <person name="Harris D.E."/>
            <person name="Gordon S.V."/>
            <person name="Eiglmeier K."/>
            <person name="Gas S."/>
            <person name="Barry C.E. III"/>
            <person name="Tekaia F."/>
            <person name="Badcock K."/>
            <person name="Basham D."/>
            <person name="Brown D."/>
            <person name="Chillingworth T."/>
            <person name="Connor R."/>
            <person name="Davies R.M."/>
            <person name="Devlin K."/>
            <person name="Feltwell T."/>
            <person name="Gentles S."/>
            <person name="Hamlin N."/>
            <person name="Holroyd S."/>
            <person name="Hornsby T."/>
            <person name="Jagels K."/>
            <person name="Krogh A."/>
            <person name="McLean J."/>
            <person name="Moule S."/>
            <person name="Murphy L.D."/>
            <person name="Oliver S."/>
            <person name="Osborne J."/>
            <person name="Quail M.A."/>
            <person name="Rajandream M.A."/>
            <person name="Rogers J."/>
            <person name="Rutter S."/>
            <person name="Seeger K."/>
            <person name="Skelton S."/>
            <person name="Squares S."/>
            <person name="Squares R."/>
            <person name="Sulston J.E."/>
            <person name="Taylor K."/>
            <person name="Whitehead S."/>
            <person name="Barrell B.G."/>
        </authorList>
    </citation>
    <scope>NUCLEOTIDE SEQUENCE [LARGE SCALE GENOMIC DNA]</scope>
    <source>
        <strain>ATCC 25618 / H37Rv</strain>
    </source>
</reference>
<reference key="4">
    <citation type="journal article" date="1994" name="J. Appl. Bacteriol.">
        <title>Isolation of a 43 kDa protein from Mycobacterium tuberculosis H37Rv and its identification as a pyridine nucleotide transhydrogenase.</title>
        <authorList>
            <person name="Deshpande R.G."/>
            <person name="Khan M.B."/>
            <person name="Bhat D.A."/>
            <person name="Navalkar R.G."/>
        </authorList>
    </citation>
    <scope>PROTEIN SEQUENCE OF 1-21</scope>
    <source>
        <strain>ATCC 25618 / H37Rv</strain>
    </source>
</reference>
<reference key="5">
    <citation type="journal article" date="1999" name="Biochem. J.">
        <title>Properties of the 40 kDa antigen of Mycobacterium tuberculosis, a functional L-alanine dehydrogenase.</title>
        <authorList>
            <person name="Hutter B."/>
            <person name="Singh M."/>
        </authorList>
    </citation>
    <scope>FUNCTION</scope>
    <scope>CATALYTIC ACTIVITY</scope>
    <scope>SUBSTRATE SPECIFICITY</scope>
    <scope>ACTIVITY REGULATION</scope>
    <scope>SUBCELLULAR LOCATION</scope>
    <scope>BIOPHYSICOCHEMICAL PROPERTIES</scope>
</reference>
<reference key="6">
    <citation type="journal article" date="2002" name="Mol. Microbiol.">
        <title>Evaluation of a nutrient starvation model of Mycobacterium tuberculosis persistence by gene and protein expression profiling.</title>
        <authorList>
            <person name="Betts J.C."/>
            <person name="Lukey P.T."/>
            <person name="Robb L.C."/>
            <person name="McAdam R.A."/>
            <person name="Duncan K."/>
        </authorList>
    </citation>
    <scope>INDUCTION BY STARVATION</scope>
</reference>
<reference key="7">
    <citation type="journal article" date="2011" name="Mol. Cell. Proteomics">
        <title>Proteogenomic analysis of Mycobacterium tuberculosis by high resolution mass spectrometry.</title>
        <authorList>
            <person name="Kelkar D.S."/>
            <person name="Kumar D."/>
            <person name="Kumar P."/>
            <person name="Balakrishnan L."/>
            <person name="Muthusamy B."/>
            <person name="Yadav A.K."/>
            <person name="Shrivastava P."/>
            <person name="Marimuthu A."/>
            <person name="Anand S."/>
            <person name="Sundaram H."/>
            <person name="Kingsbury R."/>
            <person name="Harsha H.C."/>
            <person name="Nair B."/>
            <person name="Prasad T.S."/>
            <person name="Chauhan D.S."/>
            <person name="Katoch K."/>
            <person name="Katoch V.M."/>
            <person name="Kumar P."/>
            <person name="Chaerkady R."/>
            <person name="Ramachandran S."/>
            <person name="Dash D."/>
            <person name="Pandey A."/>
        </authorList>
    </citation>
    <scope>IDENTIFICATION BY MASS SPECTROMETRY [LARGE SCALE ANALYSIS]</scope>
    <source>
        <strain>ATCC 25618 / H37Rv</strain>
    </source>
</reference>
<reference key="8">
    <citation type="journal article" date="2008" name="J. Mol. Biol.">
        <title>Three-dimensional structures of apo- and holo-L-alanine dehydrogenase from Mycobacterium tuberculosis reveal conformational changes upon coenzyme binding.</title>
        <authorList>
            <person name="Agren D."/>
            <person name="Stehr M."/>
            <person name="Berthold C.L."/>
            <person name="Kapoor S."/>
            <person name="Oehlmann W."/>
            <person name="Singh M."/>
            <person name="Schneider G."/>
        </authorList>
    </citation>
    <scope>X-RAY CRYSTALLOGRAPHY (2.8 ANGSTROMS) OF WILD TYPE AND OF MUTANT ASN-270 IN COMPLEX WITH NAD AND SUBSTRATE ANALOGS</scope>
    <scope>MUTAGENESIS OF HIS-96 AND ASP-270</scope>
    <scope>ACTIVE SITE</scope>
    <scope>BIOPHYSICOCHEMICAL PROPERTIES</scope>
    <scope>REACTION MECHANISM</scope>
    <scope>CATALYTIC ACTIVITY</scope>
    <scope>COFACTOR</scope>
    <scope>SUBUNIT</scope>
</reference>
<reference key="9">
    <citation type="journal article" date="2008" name="Proteins">
        <title>Crystal structures of the Mycobacterium tuberculosis secretory antigen alanine dehydrogenase (Rv2780) in apo and ternary complex forms captures 'open' and 'closed' enzyme conformations.</title>
        <authorList>
            <person name="Tripathi S.M."/>
            <person name="Ramachandran R."/>
        </authorList>
    </citation>
    <scope>X-RAY CRYSTALLOGRAPHY (2.6 ANGSTROMS) IN COMPLEX WITH NAD AND SUBSTRATE ANALOGS</scope>
    <scope>REACTION MECHANISM</scope>
    <scope>SUBUNIT</scope>
</reference>
<name>DHA_MYCTU</name>
<keyword id="KW-0002">3D-structure</keyword>
<keyword id="KW-0903">Direct protein sequencing</keyword>
<keyword id="KW-0460">Magnesium</keyword>
<keyword id="KW-0479">Metal-binding</keyword>
<keyword id="KW-0520">NAD</keyword>
<keyword id="KW-0547">Nucleotide-binding</keyword>
<keyword id="KW-0560">Oxidoreductase</keyword>
<keyword id="KW-1185">Reference proteome</keyword>
<keyword id="KW-0964">Secreted</keyword>
<protein>
    <recommendedName>
        <fullName>Alanine dehydrogenase</fullName>
        <ecNumber evidence="1 3">1.4.1.1</ecNumber>
    </recommendedName>
    <alternativeName>
        <fullName>40 kDa antigen</fullName>
    </alternativeName>
    <alternativeName>
        <fullName>TB43</fullName>
    </alternativeName>
</protein>
<organism>
    <name type="scientific">Mycobacterium tuberculosis (strain ATCC 25618 / H37Rv)</name>
    <dbReference type="NCBI Taxonomy" id="83332"/>
    <lineage>
        <taxon>Bacteria</taxon>
        <taxon>Bacillati</taxon>
        <taxon>Actinomycetota</taxon>
        <taxon>Actinomycetes</taxon>
        <taxon>Mycobacteriales</taxon>
        <taxon>Mycobacteriaceae</taxon>
        <taxon>Mycobacterium</taxon>
        <taxon>Mycobacterium tuberculosis complex</taxon>
    </lineage>
</organism>
<comment type="function">
    <text evidence="1">Catalyzes the reversible reductive amination of pyruvate to L-alanine. However, since the physiological environment of M.tuberculosis has a neutral pH, it can be assumed that the enzyme catalyzes exclusively the formation of L-alanine. May play a role in cell wall synthesis as L-alanine is an important constituent of the peptidoglycan layer.</text>
</comment>
<comment type="catalytic activity">
    <reaction evidence="1 3">
        <text>L-alanine + NAD(+) + H2O = pyruvate + NH4(+) + NADH + H(+)</text>
        <dbReference type="Rhea" id="RHEA:18405"/>
        <dbReference type="ChEBI" id="CHEBI:15361"/>
        <dbReference type="ChEBI" id="CHEBI:15377"/>
        <dbReference type="ChEBI" id="CHEBI:15378"/>
        <dbReference type="ChEBI" id="CHEBI:28938"/>
        <dbReference type="ChEBI" id="CHEBI:57540"/>
        <dbReference type="ChEBI" id="CHEBI:57945"/>
        <dbReference type="ChEBI" id="CHEBI:57972"/>
        <dbReference type="EC" id="1.4.1.1"/>
    </reaction>
</comment>
<comment type="cofactor">
    <cofactor evidence="3">
        <name>Mg(2+)</name>
        <dbReference type="ChEBI" id="CHEBI:18420"/>
    </cofactor>
    <text evidence="3">Binds 1 Mg(2+) ion per subunit.</text>
</comment>
<comment type="activity regulation">
    <text evidence="1">Inhibited by CuSO(4) and ZnCl(2).</text>
</comment>
<comment type="biophysicochemical properties">
    <kinetics>
        <KM evidence="1">98.2 uM for NADH (at pH 7.4 and at 37 degrees Celsius)</KM>
        <KM evidence="1">0.31 mM for NAD (at pH 10.2 and at 37 degrees Celsius)</KM>
        <KM evidence="3">0.76 mM for pyruvate (at pH 7.4 and at 25 degrees Celsius)</KM>
        <KM evidence="1">1.45 mM for pyruvate (at pH 7.4 and at 37 degrees Celsius)</KM>
        <KM evidence="1">13.8 mM for L-alanine (at pH 10.2 and at 37 degrees Celsius)</KM>
        <KM evidence="3">15.6 mM for L-alanine (at pH 10.2 and at 25 degrees Celsius)</KM>
        <KM evidence="1">35.4 mM for ammonium (at pH 7.4 and at 37 degrees Celsius)</KM>
        <Vmax evidence="1">31.8 umol/min/mg enzyme for reductive amination</Vmax>
        <Vmax evidence="1">23.7 umol/min/mg enzyme for oxidative deamination</Vmax>
    </kinetics>
    <phDependence>
        <text evidence="1">Optimum pH is between 10 and 11 for the oxidative deamination and between 7 and 7.5 for the reductive amination.</text>
    </phDependence>
    <temperatureDependence>
        <text evidence="1 3">Relatively stable, it loses only 25% of its total activity after 4 hours at 60 degrees Celsius. The enzyme is much more active at temperatures above 37 degrees Celsius, particularly in the reductive amination. The velocity almost doubles at temperatures between 60-65 degrees Celsius compared with 37 degrees Celsius. Above 65 degrees Celsius there is a sharp decrease in activity, due to thermal inactivation of the enzyme.</text>
    </temperatureDependence>
</comment>
<comment type="pathway">
    <text>Amino-acid degradation; L-alanine degradation via dehydrogenase pathway; NH(3) and pyruvate from L-alanine: step 1/1.</text>
</comment>
<comment type="subunit">
    <text evidence="3 4">Homohexamer. Trimer of dimers.</text>
</comment>
<comment type="subcellular location">
    <subcellularLocation>
        <location evidence="1">Secreted</location>
    </subcellularLocation>
</comment>
<comment type="induction">
    <text evidence="2">Upon nutrient starvation.</text>
</comment>
<comment type="miscellaneous">
    <text evidence="6">L-alanine dehydrogenase activity increases when the M.tuberculosis is shifted from aerobic to anaerobic growth conditions.</text>
</comment>
<comment type="similarity">
    <text evidence="5">Belongs to the AlaDH/PNT family.</text>
</comment>
<proteinExistence type="evidence at protein level"/>
<feature type="chain" id="PRO_0000198994" description="Alanine dehydrogenase">
    <location>
        <begin position="1"/>
        <end position="371"/>
    </location>
</feature>
<feature type="active site" description="Proton donor/acceptor" evidence="3">
    <location>
        <position position="96"/>
    </location>
</feature>
<feature type="active site" description="Proton donor/acceptor" evidence="3">
    <location>
        <position position="270"/>
    </location>
</feature>
<feature type="binding site" evidence="3">
    <location>
        <position position="15"/>
    </location>
    <ligand>
        <name>substrate</name>
    </ligand>
</feature>
<feature type="binding site" evidence="3">
    <location>
        <position position="75"/>
    </location>
    <ligand>
        <name>substrate</name>
    </ligand>
</feature>
<feature type="binding site" evidence="3 4">
    <location>
        <position position="134"/>
    </location>
    <ligand>
        <name>NAD(+)</name>
        <dbReference type="ChEBI" id="CHEBI:57540"/>
    </ligand>
</feature>
<feature type="binding site" evidence="3 4">
    <location>
        <begin position="178"/>
        <end position="179"/>
    </location>
    <ligand>
        <name>NAD(+)</name>
        <dbReference type="ChEBI" id="CHEBI:57540"/>
    </ligand>
</feature>
<feature type="binding site" evidence="3 4">
    <location>
        <position position="198"/>
    </location>
    <ligand>
        <name>NAD(+)</name>
        <dbReference type="ChEBI" id="CHEBI:57540"/>
    </ligand>
</feature>
<feature type="binding site" evidence="3 4">
    <location>
        <position position="203"/>
    </location>
    <ligand>
        <name>NAD(+)</name>
        <dbReference type="ChEBI" id="CHEBI:57540"/>
    </ligand>
</feature>
<feature type="binding site" evidence="3 4">
    <location>
        <position position="220"/>
    </location>
    <ligand>
        <name>NAD(+)</name>
        <dbReference type="ChEBI" id="CHEBI:57540"/>
    </ligand>
</feature>
<feature type="binding site" evidence="3 4">
    <location>
        <begin position="239"/>
        <end position="240"/>
    </location>
    <ligand>
        <name>NAD(+)</name>
        <dbReference type="ChEBI" id="CHEBI:57540"/>
    </ligand>
</feature>
<feature type="binding site" evidence="3 4">
    <location>
        <begin position="267"/>
        <end position="270"/>
    </location>
    <ligand>
        <name>NAD(+)</name>
        <dbReference type="ChEBI" id="CHEBI:57540"/>
    </ligand>
</feature>
<feature type="binding site" evidence="3 4">
    <location>
        <position position="279"/>
    </location>
    <ligand>
        <name>NAD(+)</name>
        <dbReference type="ChEBI" id="CHEBI:57540"/>
    </ligand>
</feature>
<feature type="binding site" evidence="3 4">
    <location>
        <begin position="298"/>
        <end position="301"/>
    </location>
    <ligand>
        <name>NAD(+)</name>
        <dbReference type="ChEBI" id="CHEBI:57540"/>
    </ligand>
</feature>
<feature type="binding site" evidence="3 7">
    <location>
        <position position="323"/>
    </location>
    <ligand>
        <name>Mg(2+)</name>
        <dbReference type="ChEBI" id="CHEBI:18420"/>
    </ligand>
</feature>
<feature type="binding site" evidence="3 7">
    <location>
        <position position="327"/>
    </location>
    <ligand>
        <name>Mg(2+)</name>
        <dbReference type="ChEBI" id="CHEBI:18420"/>
    </ligand>
</feature>
<feature type="mutagenesis site" description="Completely inactive mutant." evidence="3">
    <original>H</original>
    <variation>A</variation>
    <location>
        <position position="96"/>
    </location>
</feature>
<feature type="mutagenesis site" description="Completely inactive mutant." evidence="3">
    <original>D</original>
    <variation>A</variation>
    <location>
        <position position="270"/>
    </location>
</feature>
<feature type="mutagenesis site" description="Completely inactive mutant. The bifurcated hydrogen bond between D-270 and the ribose of NAD is replaced by a single hydrogen bond." evidence="3">
    <original>D</original>
    <variation>N</variation>
    <location>
        <position position="270"/>
    </location>
</feature>
<feature type="sequence conflict" description="In Ref. 1; CAA44791." evidence="5" ref="1">
    <original>E</original>
    <variation>EFQ</variation>
    <location>
        <position position="13"/>
    </location>
</feature>
<feature type="strand" evidence="8">
    <location>
        <begin position="2"/>
        <end position="5"/>
    </location>
</feature>
<feature type="helix" evidence="8">
    <location>
        <begin position="20"/>
        <end position="28"/>
    </location>
</feature>
<feature type="strand" evidence="8">
    <location>
        <begin position="32"/>
        <end position="36"/>
    </location>
</feature>
<feature type="turn" evidence="8">
    <location>
        <begin position="37"/>
        <end position="40"/>
    </location>
</feature>
<feature type="helix" evidence="8">
    <location>
        <begin position="41"/>
        <end position="43"/>
    </location>
</feature>
<feature type="helix" evidence="8">
    <location>
        <begin position="47"/>
        <end position="53"/>
    </location>
</feature>
<feature type="strand" evidence="8">
    <location>
        <begin position="56"/>
        <end position="59"/>
    </location>
</feature>
<feature type="helix" evidence="8">
    <location>
        <begin position="61"/>
        <end position="67"/>
    </location>
</feature>
<feature type="strand" evidence="8">
    <location>
        <begin position="69"/>
        <end position="72"/>
    </location>
</feature>
<feature type="helix" evidence="8">
    <location>
        <begin position="79"/>
        <end position="84"/>
    </location>
</feature>
<feature type="strand" evidence="8">
    <location>
        <begin position="90"/>
        <end position="93"/>
    </location>
</feature>
<feature type="helix" evidence="8">
    <location>
        <begin position="97"/>
        <end position="99"/>
    </location>
</feature>
<feature type="helix" evidence="8">
    <location>
        <begin position="101"/>
        <end position="110"/>
    </location>
</feature>
<feature type="strand" evidence="8">
    <location>
        <begin position="113"/>
        <end position="116"/>
    </location>
</feature>
<feature type="helix" evidence="8">
    <location>
        <begin position="117"/>
        <end position="119"/>
    </location>
</feature>
<feature type="turn" evidence="8">
    <location>
        <begin position="128"/>
        <end position="130"/>
    </location>
</feature>
<feature type="helix" evidence="8">
    <location>
        <begin position="131"/>
        <end position="148"/>
    </location>
</feature>
<feature type="helix" evidence="8">
    <location>
        <begin position="151"/>
        <end position="153"/>
    </location>
</feature>
<feature type="strand" evidence="8">
    <location>
        <begin position="170"/>
        <end position="174"/>
    </location>
</feature>
<feature type="helix" evidence="8">
    <location>
        <begin position="178"/>
        <end position="189"/>
    </location>
</feature>
<feature type="strand" evidence="8">
    <location>
        <begin position="193"/>
        <end position="199"/>
    </location>
</feature>
<feature type="helix" evidence="8">
    <location>
        <begin position="201"/>
        <end position="210"/>
    </location>
</feature>
<feature type="turn" evidence="8">
    <location>
        <begin position="211"/>
        <end position="213"/>
    </location>
</feature>
<feature type="strand" evidence="8">
    <location>
        <begin position="214"/>
        <end position="219"/>
    </location>
</feature>
<feature type="helix" evidence="8">
    <location>
        <begin position="222"/>
        <end position="231"/>
    </location>
</feature>
<feature type="strand" evidence="8">
    <location>
        <begin position="233"/>
        <end position="237"/>
    </location>
</feature>
<feature type="strand" evidence="10">
    <location>
        <begin position="242"/>
        <end position="244"/>
    </location>
</feature>
<feature type="helix" evidence="8">
    <location>
        <begin position="252"/>
        <end position="255"/>
    </location>
</feature>
<feature type="strand" evidence="8">
    <location>
        <begin position="263"/>
        <end position="266"/>
    </location>
</feature>
<feature type="helix" evidence="8">
    <location>
        <begin position="267"/>
        <end position="270"/>
    </location>
</feature>
<feature type="strand" evidence="8">
    <location>
        <begin position="283"/>
        <end position="285"/>
    </location>
</feature>
<feature type="strand" evidence="8">
    <location>
        <begin position="287"/>
        <end position="290"/>
    </location>
</feature>
<feature type="strand" evidence="8">
    <location>
        <begin position="293"/>
        <end position="296"/>
    </location>
</feature>
<feature type="strand" evidence="10">
    <location>
        <begin position="298"/>
        <end position="300"/>
    </location>
</feature>
<feature type="helix" evidence="8">
    <location>
        <begin position="301"/>
        <end position="304"/>
    </location>
</feature>
<feature type="helix" evidence="8">
    <location>
        <begin position="306"/>
        <end position="335"/>
    </location>
</feature>
<feature type="helix" evidence="8">
    <location>
        <begin position="337"/>
        <end position="340"/>
    </location>
</feature>
<feature type="strand" evidence="8">
    <location>
        <begin position="343"/>
        <end position="346"/>
    </location>
</feature>
<feature type="helix" evidence="8">
    <location>
        <begin position="353"/>
        <end position="359"/>
    </location>
</feature>
<feature type="strand" evidence="9">
    <location>
        <begin position="360"/>
        <end position="362"/>
    </location>
</feature>
<feature type="helix" evidence="8">
    <location>
        <begin position="367"/>
        <end position="370"/>
    </location>
</feature>
<evidence type="ECO:0000269" key="1">
    <source>
    </source>
</evidence>
<evidence type="ECO:0000269" key="2">
    <source>
    </source>
</evidence>
<evidence type="ECO:0000269" key="3">
    <source>
    </source>
</evidence>
<evidence type="ECO:0000269" key="4">
    <source>
    </source>
</evidence>
<evidence type="ECO:0000305" key="5"/>
<evidence type="ECO:0000305" key="6">
    <source>
    </source>
</evidence>
<evidence type="ECO:0007744" key="7">
    <source>
        <dbReference type="PDB" id="2VHX"/>
    </source>
</evidence>
<evidence type="ECO:0007829" key="8">
    <source>
        <dbReference type="PDB" id="2VHW"/>
    </source>
</evidence>
<evidence type="ECO:0007829" key="9">
    <source>
        <dbReference type="PDB" id="2VOJ"/>
    </source>
</evidence>
<evidence type="ECO:0007829" key="10">
    <source>
        <dbReference type="PDB" id="6O7F"/>
    </source>
</evidence>
<dbReference type="EC" id="1.4.1.1" evidence="1 3"/>
<dbReference type="EMBL" id="X63069">
    <property type="protein sequence ID" value="CAA44791.1"/>
    <property type="molecule type" value="Genomic_DNA"/>
</dbReference>
<dbReference type="EMBL" id="U92472">
    <property type="protein sequence ID" value="AAC38804.1"/>
    <property type="molecule type" value="Genomic_DNA"/>
</dbReference>
<dbReference type="EMBL" id="AL123456">
    <property type="protein sequence ID" value="CCP45579.1"/>
    <property type="molecule type" value="Genomic_DNA"/>
</dbReference>
<dbReference type="PIR" id="C70883">
    <property type="entry name" value="A43830"/>
</dbReference>
<dbReference type="RefSeq" id="NP_217296.1">
    <property type="nucleotide sequence ID" value="NC_000962.3"/>
</dbReference>
<dbReference type="RefSeq" id="WP_003899477.1">
    <property type="nucleotide sequence ID" value="NZ_NVQJ01000020.1"/>
</dbReference>
<dbReference type="PDB" id="2VHV">
    <property type="method" value="X-ray"/>
    <property type="resolution" value="2.80 A"/>
    <property type="chains" value="A/B=1-371"/>
</dbReference>
<dbReference type="PDB" id="2VHW">
    <property type="method" value="X-ray"/>
    <property type="resolution" value="2.00 A"/>
    <property type="chains" value="A/B/C/D/E/F=1-371"/>
</dbReference>
<dbReference type="PDB" id="2VHX">
    <property type="method" value="X-ray"/>
    <property type="resolution" value="2.00 A"/>
    <property type="chains" value="A/B/C/D/E/F=1-371"/>
</dbReference>
<dbReference type="PDB" id="2VHY">
    <property type="method" value="X-ray"/>
    <property type="resolution" value="2.30 A"/>
    <property type="chains" value="A/B=1-371"/>
</dbReference>
<dbReference type="PDB" id="2VHZ">
    <property type="method" value="X-ray"/>
    <property type="resolution" value="2.04 A"/>
    <property type="chains" value="A/B=1-371"/>
</dbReference>
<dbReference type="PDB" id="2VOE">
    <property type="method" value="X-ray"/>
    <property type="resolution" value="2.60 A"/>
    <property type="chains" value="A/B/C/D/E/F=1-371"/>
</dbReference>
<dbReference type="PDB" id="2VOJ">
    <property type="method" value="X-ray"/>
    <property type="resolution" value="2.60 A"/>
    <property type="chains" value="A/C/E=1-371"/>
</dbReference>
<dbReference type="PDB" id="6O7F">
    <property type="method" value="X-ray"/>
    <property type="resolution" value="2.30 A"/>
    <property type="chains" value="A=1-371"/>
</dbReference>
<dbReference type="PDBsum" id="2VHV"/>
<dbReference type="PDBsum" id="2VHW"/>
<dbReference type="PDBsum" id="2VHX"/>
<dbReference type="PDBsum" id="2VHY"/>
<dbReference type="PDBsum" id="2VHZ"/>
<dbReference type="PDBsum" id="2VOE"/>
<dbReference type="PDBsum" id="2VOJ"/>
<dbReference type="PDBsum" id="6O7F"/>
<dbReference type="SMR" id="P9WQB1"/>
<dbReference type="FunCoup" id="P9WQB1">
    <property type="interactions" value="4"/>
</dbReference>
<dbReference type="STRING" id="83332.Rv2780"/>
<dbReference type="PaxDb" id="83332-Rv2780"/>
<dbReference type="DNASU" id="888493"/>
<dbReference type="GeneID" id="45426769"/>
<dbReference type="GeneID" id="888493"/>
<dbReference type="KEGG" id="mtu:Rv2780"/>
<dbReference type="KEGG" id="mtv:RVBD_2780"/>
<dbReference type="TubercuList" id="Rv2780"/>
<dbReference type="eggNOG" id="COG0686">
    <property type="taxonomic scope" value="Bacteria"/>
</dbReference>
<dbReference type="InParanoid" id="P9WQB1"/>
<dbReference type="OrthoDB" id="9804592at2"/>
<dbReference type="PhylomeDB" id="P9WQB1"/>
<dbReference type="BioCyc" id="MetaCyc:G185E-7029-MONOMER"/>
<dbReference type="BRENDA" id="1.4.1.1">
    <property type="organism ID" value="3445"/>
</dbReference>
<dbReference type="UniPathway" id="UPA00527">
    <property type="reaction ID" value="UER00585"/>
</dbReference>
<dbReference type="EvolutionaryTrace" id="P9WQB1"/>
<dbReference type="Proteomes" id="UP000001584">
    <property type="component" value="Chromosome"/>
</dbReference>
<dbReference type="GO" id="GO:0005829">
    <property type="term" value="C:cytosol"/>
    <property type="evidence" value="ECO:0007005"/>
    <property type="project" value="MTBBASE"/>
</dbReference>
<dbReference type="GO" id="GO:0005576">
    <property type="term" value="C:extracellular region"/>
    <property type="evidence" value="ECO:0000314"/>
    <property type="project" value="MTBBASE"/>
</dbReference>
<dbReference type="GO" id="GO:0009274">
    <property type="term" value="C:peptidoglycan-based cell wall"/>
    <property type="evidence" value="ECO:0007005"/>
    <property type="project" value="MTBBASE"/>
</dbReference>
<dbReference type="GO" id="GO:0005886">
    <property type="term" value="C:plasma membrane"/>
    <property type="evidence" value="ECO:0007005"/>
    <property type="project" value="MTBBASE"/>
</dbReference>
<dbReference type="GO" id="GO:0000286">
    <property type="term" value="F:alanine dehydrogenase activity"/>
    <property type="evidence" value="ECO:0000314"/>
    <property type="project" value="MTBBASE"/>
</dbReference>
<dbReference type="GO" id="GO:0046872">
    <property type="term" value="F:metal ion binding"/>
    <property type="evidence" value="ECO:0007669"/>
    <property type="project" value="UniProtKB-KW"/>
</dbReference>
<dbReference type="GO" id="GO:0000166">
    <property type="term" value="F:nucleotide binding"/>
    <property type="evidence" value="ECO:0007669"/>
    <property type="project" value="UniProtKB-KW"/>
</dbReference>
<dbReference type="GO" id="GO:0006524">
    <property type="term" value="P:alanine catabolic process"/>
    <property type="evidence" value="ECO:0000314"/>
    <property type="project" value="MTBBASE"/>
</dbReference>
<dbReference type="GO" id="GO:0042853">
    <property type="term" value="P:L-alanine catabolic process"/>
    <property type="evidence" value="ECO:0007669"/>
    <property type="project" value="UniProtKB-UniPathway"/>
</dbReference>
<dbReference type="GO" id="GO:0001666">
    <property type="term" value="P:response to hypoxia"/>
    <property type="evidence" value="ECO:0000270"/>
    <property type="project" value="MTBBASE"/>
</dbReference>
<dbReference type="CDD" id="cd05305">
    <property type="entry name" value="L-AlaDH"/>
    <property type="match status" value="1"/>
</dbReference>
<dbReference type="FunFam" id="3.40.50.720:FF:000049">
    <property type="entry name" value="Alanine dehydrogenase"/>
    <property type="match status" value="1"/>
</dbReference>
<dbReference type="Gene3D" id="3.40.50.720">
    <property type="entry name" value="NAD(P)-binding Rossmann-like Domain"/>
    <property type="match status" value="2"/>
</dbReference>
<dbReference type="InterPro" id="IPR008141">
    <property type="entry name" value="Ala_DH"/>
</dbReference>
<dbReference type="InterPro" id="IPR008143">
    <property type="entry name" value="Ala_DH/PNT_CS2"/>
</dbReference>
<dbReference type="InterPro" id="IPR008142">
    <property type="entry name" value="AlaDH/PNT_CS1"/>
</dbReference>
<dbReference type="InterPro" id="IPR007886">
    <property type="entry name" value="AlaDH/PNT_N"/>
</dbReference>
<dbReference type="InterPro" id="IPR007698">
    <property type="entry name" value="AlaDH/PNT_NAD(H)-bd"/>
</dbReference>
<dbReference type="InterPro" id="IPR036291">
    <property type="entry name" value="NAD(P)-bd_dom_sf"/>
</dbReference>
<dbReference type="NCBIfam" id="TIGR00518">
    <property type="entry name" value="alaDH"/>
    <property type="match status" value="1"/>
</dbReference>
<dbReference type="PANTHER" id="PTHR42795">
    <property type="entry name" value="ALANINE DEHYDROGENASE"/>
    <property type="match status" value="1"/>
</dbReference>
<dbReference type="PANTHER" id="PTHR42795:SF1">
    <property type="entry name" value="ALANINE DEHYDROGENASE"/>
    <property type="match status" value="1"/>
</dbReference>
<dbReference type="Pfam" id="PF01262">
    <property type="entry name" value="AlaDh_PNT_C"/>
    <property type="match status" value="1"/>
</dbReference>
<dbReference type="Pfam" id="PF05222">
    <property type="entry name" value="AlaDh_PNT_N"/>
    <property type="match status" value="1"/>
</dbReference>
<dbReference type="PIRSF" id="PIRSF000183">
    <property type="entry name" value="Alanine_dh"/>
    <property type="match status" value="1"/>
</dbReference>
<dbReference type="SMART" id="SM01002">
    <property type="entry name" value="AlaDh_PNT_C"/>
    <property type="match status" value="1"/>
</dbReference>
<dbReference type="SMART" id="SM01003">
    <property type="entry name" value="AlaDh_PNT_N"/>
    <property type="match status" value="1"/>
</dbReference>
<dbReference type="SUPFAM" id="SSF52283">
    <property type="entry name" value="Formate/glycerate dehydrogenase catalytic domain-like"/>
    <property type="match status" value="1"/>
</dbReference>
<dbReference type="SUPFAM" id="SSF51735">
    <property type="entry name" value="NAD(P)-binding Rossmann-fold domains"/>
    <property type="match status" value="1"/>
</dbReference>
<dbReference type="PROSITE" id="PS00836">
    <property type="entry name" value="ALADH_PNT_1"/>
    <property type="match status" value="1"/>
</dbReference>
<dbReference type="PROSITE" id="PS00837">
    <property type="entry name" value="ALADH_PNT_2"/>
    <property type="match status" value="1"/>
</dbReference>
<accession>P9WQB1</accession>
<accession>L0TC82</accession>
<accession>O33322</accession>
<accession>P30234</accession>
<gene>
    <name type="primary">ald</name>
    <name type="ordered locus">Rv2780</name>
    <name type="ORF">MTV002.45</name>
</gene>
<sequence length="371" mass="38713">MRVGIPTETKNNEFRVAITPAGVAELTRRGHEVLIQAGAGEGSAITDADFKAAGAQLVGTADQVWADADLLLKVKEPIAAEYGRLRHGQILFTFLHLAASRACTDALLDSGTTSIAYETVQTADGALPLLAPMSEVAGRLAAQVGAYHLMRTQGGRGVLMGGVPGVEPADVVVIGAGTAGYNAARIANGMGATVTVLDINIDKLRQLDAEFCGRIHTRYSSAYELEGAVKRADLVIGAVLVPGAKAPKLVSNSLVAHMKPGAVLVDIAIDQGGCFEGSRPTTYDHPTFAVHDTLFYCVANMPASVPKTSTYALTNATMPYVLELADHGWRAACRSNPALAKGLSTHEGALLSERVATDLGVPFTEPASVLA</sequence>